<organism>
    <name type="scientific">Geobacter sp. (strain M21)</name>
    <dbReference type="NCBI Taxonomy" id="443144"/>
    <lineage>
        <taxon>Bacteria</taxon>
        <taxon>Pseudomonadati</taxon>
        <taxon>Thermodesulfobacteriota</taxon>
        <taxon>Desulfuromonadia</taxon>
        <taxon>Geobacterales</taxon>
        <taxon>Geobacteraceae</taxon>
        <taxon>Geobacter</taxon>
    </lineage>
</organism>
<protein>
    <recommendedName>
        <fullName evidence="1">Proline--tRNA ligase</fullName>
        <ecNumber evidence="1">6.1.1.15</ecNumber>
    </recommendedName>
    <alternativeName>
        <fullName evidence="1">Prolyl-tRNA synthetase</fullName>
        <shortName evidence="1">ProRS</shortName>
    </alternativeName>
</protein>
<accession>C6E496</accession>
<sequence>MRYSQYFIPTVKETPSDAEVISHKLMLRAGMIRKLAAGIYNYLPFGLRSIRKVEAIVREEMNRAGAIELLMPAVQPAELWKESGRWEFYGKELLRFNDRKDAEFCMGPTHEEVITDLIRKEVRSYRQLPINLYQIQGKFRDEIRPRFGLMRGREFIMKDAYSFDVNEAGADVSYEKMYKAYRRIFERCGLKFRAVEADTGTIGGNYSHEFMVLADSGEDAIVSCSACEYAANMEKAETRKGEGIEHADPRPMEHVSTPGQKSIEDVAAFLGVQNTQVVKTLVLVADGEPVVALIRGDYDLNEIKLKNHLGCAELEMAEDDVVVKVTGAPTGYAGPVGLAAKVKVVADLSLEGMHNFVTGANAADTHLKNVNIGRDFSVSGFVDIRNVVIGDACPRCDSGKLEIWRGIEVGHVFKLGTKYSKALKATFLDADGKEQTIFMGCYGIGVGRTVAACIEQNHDENGIIFPIPIAPFQCIISSLSVKEDEVKAASESIYQELLEAGIEVLLDDRDERPGFKFKDADLIGIPLRIVVGAKALAEGKVELKERRSGEVEVLPIAEAIAKVKAAVKEALQV</sequence>
<keyword id="KW-0030">Aminoacyl-tRNA synthetase</keyword>
<keyword id="KW-0067">ATP-binding</keyword>
<keyword id="KW-0963">Cytoplasm</keyword>
<keyword id="KW-0436">Ligase</keyword>
<keyword id="KW-0547">Nucleotide-binding</keyword>
<keyword id="KW-0648">Protein biosynthesis</keyword>
<name>SYP_GEOSM</name>
<gene>
    <name evidence="1" type="primary">proS</name>
    <name type="ordered locus">GM21_1334</name>
</gene>
<proteinExistence type="inferred from homology"/>
<dbReference type="EC" id="6.1.1.15" evidence="1"/>
<dbReference type="EMBL" id="CP001661">
    <property type="protein sequence ID" value="ACT17394.1"/>
    <property type="molecule type" value="Genomic_DNA"/>
</dbReference>
<dbReference type="SMR" id="C6E496"/>
<dbReference type="STRING" id="443144.GM21_1334"/>
<dbReference type="KEGG" id="gem:GM21_1334"/>
<dbReference type="eggNOG" id="COG0442">
    <property type="taxonomic scope" value="Bacteria"/>
</dbReference>
<dbReference type="HOGENOM" id="CLU_016739_0_0_7"/>
<dbReference type="OrthoDB" id="9809052at2"/>
<dbReference type="GO" id="GO:0005829">
    <property type="term" value="C:cytosol"/>
    <property type="evidence" value="ECO:0007669"/>
    <property type="project" value="TreeGrafter"/>
</dbReference>
<dbReference type="GO" id="GO:0002161">
    <property type="term" value="F:aminoacyl-tRNA deacylase activity"/>
    <property type="evidence" value="ECO:0007669"/>
    <property type="project" value="InterPro"/>
</dbReference>
<dbReference type="GO" id="GO:0005524">
    <property type="term" value="F:ATP binding"/>
    <property type="evidence" value="ECO:0007669"/>
    <property type="project" value="UniProtKB-UniRule"/>
</dbReference>
<dbReference type="GO" id="GO:0004827">
    <property type="term" value="F:proline-tRNA ligase activity"/>
    <property type="evidence" value="ECO:0007669"/>
    <property type="project" value="UniProtKB-UniRule"/>
</dbReference>
<dbReference type="GO" id="GO:0006433">
    <property type="term" value="P:prolyl-tRNA aminoacylation"/>
    <property type="evidence" value="ECO:0007669"/>
    <property type="project" value="UniProtKB-UniRule"/>
</dbReference>
<dbReference type="CDD" id="cd04334">
    <property type="entry name" value="ProRS-INS"/>
    <property type="match status" value="1"/>
</dbReference>
<dbReference type="CDD" id="cd00861">
    <property type="entry name" value="ProRS_anticodon_short"/>
    <property type="match status" value="1"/>
</dbReference>
<dbReference type="CDD" id="cd00779">
    <property type="entry name" value="ProRS_core_prok"/>
    <property type="match status" value="1"/>
</dbReference>
<dbReference type="FunFam" id="3.30.930.10:FF:000012">
    <property type="entry name" value="Proline--tRNA ligase"/>
    <property type="match status" value="1"/>
</dbReference>
<dbReference type="FunFam" id="3.30.930.10:FF:000065">
    <property type="entry name" value="Proline--tRNA ligase"/>
    <property type="match status" value="1"/>
</dbReference>
<dbReference type="FunFam" id="3.40.50.800:FF:000011">
    <property type="entry name" value="Proline--tRNA ligase"/>
    <property type="match status" value="1"/>
</dbReference>
<dbReference type="Gene3D" id="3.40.50.800">
    <property type="entry name" value="Anticodon-binding domain"/>
    <property type="match status" value="1"/>
</dbReference>
<dbReference type="Gene3D" id="3.30.930.10">
    <property type="entry name" value="Bira Bifunctional Protein, Domain 2"/>
    <property type="match status" value="2"/>
</dbReference>
<dbReference type="Gene3D" id="3.90.960.10">
    <property type="entry name" value="YbaK/aminoacyl-tRNA synthetase-associated domain"/>
    <property type="match status" value="1"/>
</dbReference>
<dbReference type="HAMAP" id="MF_01569">
    <property type="entry name" value="Pro_tRNA_synth_type1"/>
    <property type="match status" value="1"/>
</dbReference>
<dbReference type="InterPro" id="IPR002314">
    <property type="entry name" value="aa-tRNA-synt_IIb"/>
</dbReference>
<dbReference type="InterPro" id="IPR006195">
    <property type="entry name" value="aa-tRNA-synth_II"/>
</dbReference>
<dbReference type="InterPro" id="IPR045864">
    <property type="entry name" value="aa-tRNA-synth_II/BPL/LPL"/>
</dbReference>
<dbReference type="InterPro" id="IPR004154">
    <property type="entry name" value="Anticodon-bd"/>
</dbReference>
<dbReference type="InterPro" id="IPR036621">
    <property type="entry name" value="Anticodon-bd_dom_sf"/>
</dbReference>
<dbReference type="InterPro" id="IPR002316">
    <property type="entry name" value="Pro-tRNA-ligase_IIa"/>
</dbReference>
<dbReference type="InterPro" id="IPR004500">
    <property type="entry name" value="Pro-tRNA-synth_IIa_bac-type"/>
</dbReference>
<dbReference type="InterPro" id="IPR023717">
    <property type="entry name" value="Pro-tRNA-Synthase_IIa_type1"/>
</dbReference>
<dbReference type="InterPro" id="IPR050062">
    <property type="entry name" value="Pro-tRNA_synthetase"/>
</dbReference>
<dbReference type="InterPro" id="IPR044140">
    <property type="entry name" value="ProRS_anticodon_short"/>
</dbReference>
<dbReference type="InterPro" id="IPR033730">
    <property type="entry name" value="ProRS_core_prok"/>
</dbReference>
<dbReference type="InterPro" id="IPR036754">
    <property type="entry name" value="YbaK/aa-tRNA-synt-asso_dom_sf"/>
</dbReference>
<dbReference type="InterPro" id="IPR007214">
    <property type="entry name" value="YbaK/aa-tRNA-synth-assoc-dom"/>
</dbReference>
<dbReference type="NCBIfam" id="NF006625">
    <property type="entry name" value="PRK09194.1"/>
    <property type="match status" value="1"/>
</dbReference>
<dbReference type="NCBIfam" id="TIGR00409">
    <property type="entry name" value="proS_fam_II"/>
    <property type="match status" value="1"/>
</dbReference>
<dbReference type="PANTHER" id="PTHR42753">
    <property type="entry name" value="MITOCHONDRIAL RIBOSOME PROTEIN L39/PROLYL-TRNA LIGASE FAMILY MEMBER"/>
    <property type="match status" value="1"/>
</dbReference>
<dbReference type="PANTHER" id="PTHR42753:SF2">
    <property type="entry name" value="PROLINE--TRNA LIGASE"/>
    <property type="match status" value="1"/>
</dbReference>
<dbReference type="Pfam" id="PF03129">
    <property type="entry name" value="HGTP_anticodon"/>
    <property type="match status" value="1"/>
</dbReference>
<dbReference type="Pfam" id="PF00587">
    <property type="entry name" value="tRNA-synt_2b"/>
    <property type="match status" value="1"/>
</dbReference>
<dbReference type="Pfam" id="PF04073">
    <property type="entry name" value="tRNA_edit"/>
    <property type="match status" value="1"/>
</dbReference>
<dbReference type="PIRSF" id="PIRSF001535">
    <property type="entry name" value="ProRS_1"/>
    <property type="match status" value="1"/>
</dbReference>
<dbReference type="PRINTS" id="PR01046">
    <property type="entry name" value="TRNASYNTHPRO"/>
</dbReference>
<dbReference type="SUPFAM" id="SSF52954">
    <property type="entry name" value="Class II aaRS ABD-related"/>
    <property type="match status" value="1"/>
</dbReference>
<dbReference type="SUPFAM" id="SSF55681">
    <property type="entry name" value="Class II aaRS and biotin synthetases"/>
    <property type="match status" value="1"/>
</dbReference>
<dbReference type="SUPFAM" id="SSF55826">
    <property type="entry name" value="YbaK/ProRS associated domain"/>
    <property type="match status" value="1"/>
</dbReference>
<dbReference type="PROSITE" id="PS50862">
    <property type="entry name" value="AA_TRNA_LIGASE_II"/>
    <property type="match status" value="1"/>
</dbReference>
<evidence type="ECO:0000255" key="1">
    <source>
        <dbReference type="HAMAP-Rule" id="MF_01569"/>
    </source>
</evidence>
<feature type="chain" id="PRO_1000215529" description="Proline--tRNA ligase">
    <location>
        <begin position="1"/>
        <end position="573"/>
    </location>
</feature>
<reference key="1">
    <citation type="submission" date="2009-07" db="EMBL/GenBank/DDBJ databases">
        <title>Complete sequence of Geobacter sp. M21.</title>
        <authorList>
            <consortium name="US DOE Joint Genome Institute"/>
            <person name="Lucas S."/>
            <person name="Copeland A."/>
            <person name="Lapidus A."/>
            <person name="Glavina del Rio T."/>
            <person name="Dalin E."/>
            <person name="Tice H."/>
            <person name="Bruce D."/>
            <person name="Goodwin L."/>
            <person name="Pitluck S."/>
            <person name="Saunders E."/>
            <person name="Brettin T."/>
            <person name="Detter J.C."/>
            <person name="Han C."/>
            <person name="Larimer F."/>
            <person name="Land M."/>
            <person name="Hauser L."/>
            <person name="Kyrpides N."/>
            <person name="Ovchinnikova G."/>
            <person name="Lovley D."/>
        </authorList>
    </citation>
    <scope>NUCLEOTIDE SEQUENCE [LARGE SCALE GENOMIC DNA]</scope>
    <source>
        <strain>M21</strain>
    </source>
</reference>
<comment type="function">
    <text evidence="1">Catalyzes the attachment of proline to tRNA(Pro) in a two-step reaction: proline is first activated by ATP to form Pro-AMP and then transferred to the acceptor end of tRNA(Pro). As ProRS can inadvertently accommodate and process non-cognate amino acids such as alanine and cysteine, to avoid such errors it has two additional distinct editing activities against alanine. One activity is designated as 'pretransfer' editing and involves the tRNA(Pro)-independent hydrolysis of activated Ala-AMP. The other activity is designated 'posttransfer' editing and involves deacylation of mischarged Ala-tRNA(Pro). The misacylated Cys-tRNA(Pro) is not edited by ProRS.</text>
</comment>
<comment type="catalytic activity">
    <reaction evidence="1">
        <text>tRNA(Pro) + L-proline + ATP = L-prolyl-tRNA(Pro) + AMP + diphosphate</text>
        <dbReference type="Rhea" id="RHEA:14305"/>
        <dbReference type="Rhea" id="RHEA-COMP:9700"/>
        <dbReference type="Rhea" id="RHEA-COMP:9702"/>
        <dbReference type="ChEBI" id="CHEBI:30616"/>
        <dbReference type="ChEBI" id="CHEBI:33019"/>
        <dbReference type="ChEBI" id="CHEBI:60039"/>
        <dbReference type="ChEBI" id="CHEBI:78442"/>
        <dbReference type="ChEBI" id="CHEBI:78532"/>
        <dbReference type="ChEBI" id="CHEBI:456215"/>
        <dbReference type="EC" id="6.1.1.15"/>
    </reaction>
</comment>
<comment type="subunit">
    <text evidence="1">Homodimer.</text>
</comment>
<comment type="subcellular location">
    <subcellularLocation>
        <location evidence="1">Cytoplasm</location>
    </subcellularLocation>
</comment>
<comment type="domain">
    <text evidence="1">Consists of three domains: the N-terminal catalytic domain, the editing domain and the C-terminal anticodon-binding domain.</text>
</comment>
<comment type="similarity">
    <text evidence="1">Belongs to the class-II aminoacyl-tRNA synthetase family. ProS type 1 subfamily.</text>
</comment>